<keyword id="KW-0378">Hydrolase</keyword>
<keyword id="KW-1185">Reference proteome</keyword>
<sequence>MKRVHVIVEGRVQGVGFRYFVQHEALKRQLTGWVKNNDDGTVEMEVQGNESALQLFLDTIEAGTMFAKVARMHIEPRDVRSDEKQFRIMYGSGF</sequence>
<feature type="chain" id="PRO_0000326713" description="Acylphosphatase">
    <location>
        <begin position="1"/>
        <end position="94"/>
    </location>
</feature>
<feature type="domain" description="Acylphosphatase-like" evidence="1">
    <location>
        <begin position="3"/>
        <end position="90"/>
    </location>
</feature>
<feature type="active site" evidence="1">
    <location>
        <position position="18"/>
    </location>
</feature>
<feature type="active site" evidence="1">
    <location>
        <position position="36"/>
    </location>
</feature>
<proteinExistence type="inferred from homology"/>
<name>ACYP_GEOKA</name>
<accession>Q5L2Y4</accession>
<protein>
    <recommendedName>
        <fullName>Acylphosphatase</fullName>
        <ecNumber>3.6.1.7</ecNumber>
    </recommendedName>
    <alternativeName>
        <fullName>Acylphosphate phosphohydrolase</fullName>
    </alternativeName>
</protein>
<dbReference type="EC" id="3.6.1.7"/>
<dbReference type="EMBL" id="BA000043">
    <property type="protein sequence ID" value="BAD74696.1"/>
    <property type="molecule type" value="Genomic_DNA"/>
</dbReference>
<dbReference type="RefSeq" id="WP_011229915.1">
    <property type="nucleotide sequence ID" value="NC_006510.1"/>
</dbReference>
<dbReference type="SMR" id="Q5L2Y4"/>
<dbReference type="STRING" id="235909.GK0411"/>
<dbReference type="KEGG" id="gka:GK0411"/>
<dbReference type="eggNOG" id="COG1254">
    <property type="taxonomic scope" value="Bacteria"/>
</dbReference>
<dbReference type="HOGENOM" id="CLU_141932_2_0_9"/>
<dbReference type="Proteomes" id="UP000001172">
    <property type="component" value="Chromosome"/>
</dbReference>
<dbReference type="GO" id="GO:0003998">
    <property type="term" value="F:acylphosphatase activity"/>
    <property type="evidence" value="ECO:0007669"/>
    <property type="project" value="UniProtKB-EC"/>
</dbReference>
<dbReference type="Gene3D" id="3.30.70.100">
    <property type="match status" value="1"/>
</dbReference>
<dbReference type="InterPro" id="IPR020456">
    <property type="entry name" value="Acylphosphatase"/>
</dbReference>
<dbReference type="InterPro" id="IPR001792">
    <property type="entry name" value="Acylphosphatase-like_dom"/>
</dbReference>
<dbReference type="InterPro" id="IPR036046">
    <property type="entry name" value="Acylphosphatase-like_dom_sf"/>
</dbReference>
<dbReference type="InterPro" id="IPR017968">
    <property type="entry name" value="Acylphosphatase_CS"/>
</dbReference>
<dbReference type="NCBIfam" id="NF010995">
    <property type="entry name" value="PRK14420.1"/>
    <property type="match status" value="1"/>
</dbReference>
<dbReference type="PANTHER" id="PTHR47268">
    <property type="entry name" value="ACYLPHOSPHATASE"/>
    <property type="match status" value="1"/>
</dbReference>
<dbReference type="PANTHER" id="PTHR47268:SF4">
    <property type="entry name" value="ACYLPHOSPHATASE"/>
    <property type="match status" value="1"/>
</dbReference>
<dbReference type="Pfam" id="PF00708">
    <property type="entry name" value="Acylphosphatase"/>
    <property type="match status" value="1"/>
</dbReference>
<dbReference type="PRINTS" id="PR00112">
    <property type="entry name" value="ACYLPHPHTASE"/>
</dbReference>
<dbReference type="SUPFAM" id="SSF54975">
    <property type="entry name" value="Acylphosphatase/BLUF domain-like"/>
    <property type="match status" value="1"/>
</dbReference>
<dbReference type="PROSITE" id="PS00150">
    <property type="entry name" value="ACYLPHOSPHATASE_1"/>
    <property type="match status" value="1"/>
</dbReference>
<dbReference type="PROSITE" id="PS00151">
    <property type="entry name" value="ACYLPHOSPHATASE_2"/>
    <property type="match status" value="1"/>
</dbReference>
<dbReference type="PROSITE" id="PS51160">
    <property type="entry name" value="ACYLPHOSPHATASE_3"/>
    <property type="match status" value="1"/>
</dbReference>
<gene>
    <name type="primary">acyP</name>
    <name type="ordered locus">GK0411</name>
</gene>
<comment type="catalytic activity">
    <reaction>
        <text>an acyl phosphate + H2O = a carboxylate + phosphate + H(+)</text>
        <dbReference type="Rhea" id="RHEA:14965"/>
        <dbReference type="ChEBI" id="CHEBI:15377"/>
        <dbReference type="ChEBI" id="CHEBI:15378"/>
        <dbReference type="ChEBI" id="CHEBI:29067"/>
        <dbReference type="ChEBI" id="CHEBI:43474"/>
        <dbReference type="ChEBI" id="CHEBI:59918"/>
        <dbReference type="EC" id="3.6.1.7"/>
    </reaction>
</comment>
<comment type="similarity">
    <text evidence="2">Belongs to the acylphosphatase family.</text>
</comment>
<organism>
    <name type="scientific">Geobacillus kaustophilus (strain HTA426)</name>
    <dbReference type="NCBI Taxonomy" id="235909"/>
    <lineage>
        <taxon>Bacteria</taxon>
        <taxon>Bacillati</taxon>
        <taxon>Bacillota</taxon>
        <taxon>Bacilli</taxon>
        <taxon>Bacillales</taxon>
        <taxon>Anoxybacillaceae</taxon>
        <taxon>Geobacillus</taxon>
        <taxon>Geobacillus thermoleovorans group</taxon>
    </lineage>
</organism>
<reference key="1">
    <citation type="journal article" date="2004" name="Nucleic Acids Res.">
        <title>Thermoadaptation trait revealed by the genome sequence of thermophilic Geobacillus kaustophilus.</title>
        <authorList>
            <person name="Takami H."/>
            <person name="Takaki Y."/>
            <person name="Chee G.-J."/>
            <person name="Nishi S."/>
            <person name="Shimamura S."/>
            <person name="Suzuki H."/>
            <person name="Matsui S."/>
            <person name="Uchiyama I."/>
        </authorList>
    </citation>
    <scope>NUCLEOTIDE SEQUENCE [LARGE SCALE GENOMIC DNA]</scope>
    <source>
        <strain>HTA426</strain>
    </source>
</reference>
<evidence type="ECO:0000255" key="1">
    <source>
        <dbReference type="PROSITE-ProRule" id="PRU00520"/>
    </source>
</evidence>
<evidence type="ECO:0000305" key="2"/>